<reference key="1">
    <citation type="journal article" date="2004" name="Nature">
        <title>Genome evolution in yeasts.</title>
        <authorList>
            <person name="Dujon B."/>
            <person name="Sherman D."/>
            <person name="Fischer G."/>
            <person name="Durrens P."/>
            <person name="Casaregola S."/>
            <person name="Lafontaine I."/>
            <person name="de Montigny J."/>
            <person name="Marck C."/>
            <person name="Neuveglise C."/>
            <person name="Talla E."/>
            <person name="Goffard N."/>
            <person name="Frangeul L."/>
            <person name="Aigle M."/>
            <person name="Anthouard V."/>
            <person name="Babour A."/>
            <person name="Barbe V."/>
            <person name="Barnay S."/>
            <person name="Blanchin S."/>
            <person name="Beckerich J.-M."/>
            <person name="Beyne E."/>
            <person name="Bleykasten C."/>
            <person name="Boisrame A."/>
            <person name="Boyer J."/>
            <person name="Cattolico L."/>
            <person name="Confanioleri F."/>
            <person name="de Daruvar A."/>
            <person name="Despons L."/>
            <person name="Fabre E."/>
            <person name="Fairhead C."/>
            <person name="Ferry-Dumazet H."/>
            <person name="Groppi A."/>
            <person name="Hantraye F."/>
            <person name="Hennequin C."/>
            <person name="Jauniaux N."/>
            <person name="Joyet P."/>
            <person name="Kachouri R."/>
            <person name="Kerrest A."/>
            <person name="Koszul R."/>
            <person name="Lemaire M."/>
            <person name="Lesur I."/>
            <person name="Ma L."/>
            <person name="Muller H."/>
            <person name="Nicaud J.-M."/>
            <person name="Nikolski M."/>
            <person name="Oztas S."/>
            <person name="Ozier-Kalogeropoulos O."/>
            <person name="Pellenz S."/>
            <person name="Potier S."/>
            <person name="Richard G.-F."/>
            <person name="Straub M.-L."/>
            <person name="Suleau A."/>
            <person name="Swennen D."/>
            <person name="Tekaia F."/>
            <person name="Wesolowski-Louvel M."/>
            <person name="Westhof E."/>
            <person name="Wirth B."/>
            <person name="Zeniou-Meyer M."/>
            <person name="Zivanovic Y."/>
            <person name="Bolotin-Fukuhara M."/>
            <person name="Thierry A."/>
            <person name="Bouchier C."/>
            <person name="Caudron B."/>
            <person name="Scarpelli C."/>
            <person name="Gaillardin C."/>
            <person name="Weissenbach J."/>
            <person name="Wincker P."/>
            <person name="Souciet J.-L."/>
        </authorList>
    </citation>
    <scope>NUCLEOTIDE SEQUENCE [LARGE SCALE GENOMIC DNA]</scope>
    <source>
        <strain>ATCC 8585 / CBS 2359 / DSM 70799 / NBRC 1267 / NRRL Y-1140 / WM37</strain>
    </source>
</reference>
<feature type="chain" id="PRO_0000383785" description="Structure-specific endonuclease subunit SLX1">
    <location>
        <begin position="1"/>
        <end position="288"/>
    </location>
</feature>
<feature type="domain" description="GIY-YIG" evidence="1">
    <location>
        <begin position="10"/>
        <end position="93"/>
    </location>
</feature>
<feature type="zinc finger region" description="SLX1-type" evidence="1">
    <location>
        <begin position="209"/>
        <end position="265"/>
    </location>
</feature>
<comment type="function">
    <text evidence="1">Catalytic subunit of the SLX1-SLX4 structure-specific endonuclease that resolves DNA secondary structures generated during DNA repair and recombination. Has endonuclease activity towards branched DNA substrates, introducing single-strand cuts in duplex DNA close to junctions with ss-DNA.</text>
</comment>
<comment type="cofactor">
    <cofactor evidence="1">
        <name>a divalent metal cation</name>
        <dbReference type="ChEBI" id="CHEBI:60240"/>
    </cofactor>
</comment>
<comment type="subunit">
    <text evidence="1">Forms a heterodimer with SLX4.</text>
</comment>
<comment type="subcellular location">
    <subcellularLocation>
        <location evidence="1">Nucleus</location>
    </subcellularLocation>
</comment>
<comment type="similarity">
    <text evidence="1">Belongs to the SLX1 family.</text>
</comment>
<gene>
    <name evidence="1" type="primary">SLX1</name>
    <name type="ordered locus">KLLA0F09713g</name>
</gene>
<protein>
    <recommendedName>
        <fullName evidence="1">Structure-specific endonuclease subunit SLX1</fullName>
        <ecNumber evidence="1">3.1.-.-</ecNumber>
    </recommendedName>
</protein>
<name>SLX1_KLULA</name>
<sequence length="288" mass="33970">MSNKQHRVPDFYCSYLLRSIPKPNSFYIGSSPDPVRRLRQHNGAVRRGGAYRTKRNGTRPWKMVCFIYGFTSKIAALQFEHAWQHSYKTRFIENNERLVTKKNTRNGIATKLGNARLLMKHPYFDKMNLHIRFFDRLAWESWELNKFKVDYGLSLCEVDEAVLTDESQLDELDELNLERIKAFYEDQMAQESSLLQRYQDNLTYDQKSCMICDKKIDYIHDEGTQMVGFCSDDECDFLSCLSCLYKEFTKNSKQIIPKSGHCPNCHKCLEWSQIVKYSTVLREKLIKD</sequence>
<keyword id="KW-0227">DNA damage</keyword>
<keyword id="KW-0233">DNA recombination</keyword>
<keyword id="KW-0234">DNA repair</keyword>
<keyword id="KW-0255">Endonuclease</keyword>
<keyword id="KW-0378">Hydrolase</keyword>
<keyword id="KW-0479">Metal-binding</keyword>
<keyword id="KW-0540">Nuclease</keyword>
<keyword id="KW-0539">Nucleus</keyword>
<keyword id="KW-1185">Reference proteome</keyword>
<keyword id="KW-0862">Zinc</keyword>
<keyword id="KW-0863">Zinc-finger</keyword>
<dbReference type="EC" id="3.1.-.-" evidence="1"/>
<dbReference type="EMBL" id="CR382126">
    <property type="protein sequence ID" value="CAG98229.1"/>
    <property type="molecule type" value="Genomic_DNA"/>
</dbReference>
<dbReference type="RefSeq" id="XP_455521.1">
    <property type="nucleotide sequence ID" value="XM_455521.1"/>
</dbReference>
<dbReference type="SMR" id="Q6CKL8"/>
<dbReference type="FunCoup" id="Q6CKL8">
    <property type="interactions" value="442"/>
</dbReference>
<dbReference type="STRING" id="284590.Q6CKL8"/>
<dbReference type="PaxDb" id="284590-Q6CKL8"/>
<dbReference type="KEGG" id="kla:KLLA0_F09713g"/>
<dbReference type="eggNOG" id="KOG3005">
    <property type="taxonomic scope" value="Eukaryota"/>
</dbReference>
<dbReference type="HOGENOM" id="CLU_030739_1_1_1"/>
<dbReference type="InParanoid" id="Q6CKL8"/>
<dbReference type="OMA" id="HNRGCDF"/>
<dbReference type="Proteomes" id="UP000000598">
    <property type="component" value="Chromosome F"/>
</dbReference>
<dbReference type="GO" id="GO:0033557">
    <property type="term" value="C:Slx1-Slx4 complex"/>
    <property type="evidence" value="ECO:0007669"/>
    <property type="project" value="UniProtKB-UniRule"/>
</dbReference>
<dbReference type="GO" id="GO:0017108">
    <property type="term" value="F:5'-flap endonuclease activity"/>
    <property type="evidence" value="ECO:0007669"/>
    <property type="project" value="InterPro"/>
</dbReference>
<dbReference type="GO" id="GO:0008821">
    <property type="term" value="F:crossover junction DNA endonuclease activity"/>
    <property type="evidence" value="ECO:0007669"/>
    <property type="project" value="TreeGrafter"/>
</dbReference>
<dbReference type="GO" id="GO:0008270">
    <property type="term" value="F:zinc ion binding"/>
    <property type="evidence" value="ECO:0007669"/>
    <property type="project" value="UniProtKB-KW"/>
</dbReference>
<dbReference type="GO" id="GO:0000724">
    <property type="term" value="P:double-strand break repair via homologous recombination"/>
    <property type="evidence" value="ECO:0007669"/>
    <property type="project" value="TreeGrafter"/>
</dbReference>
<dbReference type="CDD" id="cd10455">
    <property type="entry name" value="GIY-YIG_SLX1"/>
    <property type="match status" value="1"/>
</dbReference>
<dbReference type="FunFam" id="3.40.1440.10:FF:000006">
    <property type="entry name" value="Structure-specific endonuclease subunit SLX1"/>
    <property type="match status" value="1"/>
</dbReference>
<dbReference type="Gene3D" id="3.40.1440.10">
    <property type="entry name" value="GIY-YIG endonuclease"/>
    <property type="match status" value="1"/>
</dbReference>
<dbReference type="Gene3D" id="3.30.40.10">
    <property type="entry name" value="Zinc/RING finger domain, C3HC4 (zinc finger)"/>
    <property type="match status" value="1"/>
</dbReference>
<dbReference type="HAMAP" id="MF_03100">
    <property type="entry name" value="Endonuc_su_Slx1"/>
    <property type="match status" value="1"/>
</dbReference>
<dbReference type="InterPro" id="IPR000305">
    <property type="entry name" value="GIY-YIG_endonuc"/>
</dbReference>
<dbReference type="InterPro" id="IPR035901">
    <property type="entry name" value="GIY-YIG_endonuc_sf"/>
</dbReference>
<dbReference type="InterPro" id="IPR027520">
    <property type="entry name" value="Slx1"/>
</dbReference>
<dbReference type="InterPro" id="IPR048749">
    <property type="entry name" value="SLX1_C"/>
</dbReference>
<dbReference type="InterPro" id="IPR050381">
    <property type="entry name" value="SLX1_endonuclease"/>
</dbReference>
<dbReference type="InterPro" id="IPR013083">
    <property type="entry name" value="Znf_RING/FYVE/PHD"/>
</dbReference>
<dbReference type="PANTHER" id="PTHR20208">
    <property type="entry name" value="STRUCTURE-SPECIFIC ENDONUCLEASE SUBUNIT SLX1"/>
    <property type="match status" value="1"/>
</dbReference>
<dbReference type="PANTHER" id="PTHR20208:SF10">
    <property type="entry name" value="STRUCTURE-SPECIFIC ENDONUCLEASE SUBUNIT SLX1"/>
    <property type="match status" value="1"/>
</dbReference>
<dbReference type="Pfam" id="PF01541">
    <property type="entry name" value="GIY-YIG"/>
    <property type="match status" value="1"/>
</dbReference>
<dbReference type="Pfam" id="PF21202">
    <property type="entry name" value="SLX1_C"/>
    <property type="match status" value="1"/>
</dbReference>
<dbReference type="SUPFAM" id="SSF82771">
    <property type="entry name" value="GIY-YIG endonuclease"/>
    <property type="match status" value="1"/>
</dbReference>
<dbReference type="PROSITE" id="PS50164">
    <property type="entry name" value="GIY_YIG"/>
    <property type="match status" value="1"/>
</dbReference>
<organism>
    <name type="scientific">Kluyveromyces lactis (strain ATCC 8585 / CBS 2359 / DSM 70799 / NBRC 1267 / NRRL Y-1140 / WM37)</name>
    <name type="common">Yeast</name>
    <name type="synonym">Candida sphaerica</name>
    <dbReference type="NCBI Taxonomy" id="284590"/>
    <lineage>
        <taxon>Eukaryota</taxon>
        <taxon>Fungi</taxon>
        <taxon>Dikarya</taxon>
        <taxon>Ascomycota</taxon>
        <taxon>Saccharomycotina</taxon>
        <taxon>Saccharomycetes</taxon>
        <taxon>Saccharomycetales</taxon>
        <taxon>Saccharomycetaceae</taxon>
        <taxon>Kluyveromyces</taxon>
    </lineage>
</organism>
<evidence type="ECO:0000255" key="1">
    <source>
        <dbReference type="HAMAP-Rule" id="MF_03100"/>
    </source>
</evidence>
<proteinExistence type="inferred from homology"/>
<accession>Q6CKL8</accession>